<sequence length="561" mass="64528">MKLFITITPNLEKLLHNEIKDILRTNKLTLPKFQVFEGGIEIDLTKDPNISEQEKEYYLWSISNCSRLAESIRIRVGLSFPCKNFSQFNINLEKLDYKTYFPTSSIEPQVAVSCNASTLYHTNAIKERFIKHFNNSIKDKISIDINYSKFKPIKKLLKNLRYKLRKIQNPNDDEIIGGGDDHEIIGDDEELSEEEILNRIDKLQIELEQVIGKQKNIPQSKVFIRIDQNVGQLSVDACTSGEGQLLHKRTLNKHISDAPIRETLASAIIMAIISSTRRVGSGTTEGSYLDLNKTNIWDPFVGSGTLIQEAISMLLKAKPSSCTNYKRSFQFERFKNHSTERYLKYLESINKPISPLIKNTILIGSDIDQKAIDSSIFNLSKQGYQHENIKFFKGDFKSIYLDQINIDNSLDDDGDNNNNKPFTIITNLPYGTRVLNRNQPQQQQNQPIQPKATKIKEGENYYEDDDDDDFFSIRSPKKDNVNIYLNNSISKDLRDLFKRFGDMIHESNESVLRDVFVLNGNSHFQSISTNNGKNNFEWERILNFRNGGLTVELLKMVKKPN</sequence>
<comment type="induction">
    <text evidence="2">Down-regulated by Pseudomonas aeruginosa, PAO1 strain and PA14 strain infection.</text>
</comment>
<keyword id="KW-0175">Coiled coil</keyword>
<keyword id="KW-1185">Reference proteome</keyword>
<organism>
    <name type="scientific">Dictyostelium discoideum</name>
    <name type="common">Social amoeba</name>
    <dbReference type="NCBI Taxonomy" id="44689"/>
    <lineage>
        <taxon>Eukaryota</taxon>
        <taxon>Amoebozoa</taxon>
        <taxon>Evosea</taxon>
        <taxon>Eumycetozoa</taxon>
        <taxon>Dictyostelia</taxon>
        <taxon>Dictyosteliales</taxon>
        <taxon>Dictyosteliaceae</taxon>
        <taxon>Dictyostelium</taxon>
    </lineage>
</organism>
<dbReference type="EMBL" id="AAFI02000204">
    <property type="protein sequence ID" value="EAL60757.1"/>
    <property type="molecule type" value="Genomic_DNA"/>
</dbReference>
<dbReference type="RefSeq" id="XP_629173.1">
    <property type="nucleotide sequence ID" value="XM_629171.1"/>
</dbReference>
<dbReference type="SMR" id="Q54BW1"/>
<dbReference type="STRING" id="44689.Q54BW1"/>
<dbReference type="PaxDb" id="44689-DDB0302467"/>
<dbReference type="EnsemblProtists" id="EAL60757">
    <property type="protein sequence ID" value="EAL60757"/>
    <property type="gene ID" value="DDB_G0293380"/>
</dbReference>
<dbReference type="GeneID" id="8629194"/>
<dbReference type="KEGG" id="ddi:DDB_G0293380"/>
<dbReference type="dictyBase" id="DDB_G0293380"/>
<dbReference type="VEuPathDB" id="AmoebaDB:DDB_G0293380"/>
<dbReference type="eggNOG" id="ENOG502TMNJ">
    <property type="taxonomic scope" value="Eukaryota"/>
</dbReference>
<dbReference type="HOGENOM" id="CLU_486120_0_0_1"/>
<dbReference type="InParanoid" id="Q54BW1"/>
<dbReference type="OMA" id="NFEWERI"/>
<dbReference type="PRO" id="PR:Q54BW1"/>
<dbReference type="Proteomes" id="UP000002195">
    <property type="component" value="Chromosome 6"/>
</dbReference>
<dbReference type="GO" id="GO:0016423">
    <property type="term" value="F:tRNA (guanine) methyltransferase activity"/>
    <property type="evidence" value="ECO:0000318"/>
    <property type="project" value="GO_Central"/>
</dbReference>
<dbReference type="GO" id="GO:0030488">
    <property type="term" value="P:tRNA methylation"/>
    <property type="evidence" value="ECO:0000318"/>
    <property type="project" value="GO_Central"/>
</dbReference>
<dbReference type="CDD" id="cd11715">
    <property type="entry name" value="THUMP_AdoMetMT"/>
    <property type="match status" value="1"/>
</dbReference>
<dbReference type="FunFam" id="3.30.2130.30:FF:000022">
    <property type="entry name" value="Putative uncharacterized protein DDB_G0293380"/>
    <property type="match status" value="1"/>
</dbReference>
<dbReference type="Gene3D" id="3.30.2130.30">
    <property type="match status" value="1"/>
</dbReference>
<dbReference type="Gene3D" id="3.40.50.150">
    <property type="entry name" value="Vaccinia Virus protein VP39"/>
    <property type="match status" value="1"/>
</dbReference>
<dbReference type="InterPro" id="IPR000241">
    <property type="entry name" value="RlmKL-like_Mtase"/>
</dbReference>
<dbReference type="InterPro" id="IPR029063">
    <property type="entry name" value="SAM-dependent_MTases_sf"/>
</dbReference>
<dbReference type="PANTHER" id="PTHR14911">
    <property type="entry name" value="THUMP DOMAIN-CONTAINING"/>
    <property type="match status" value="1"/>
</dbReference>
<dbReference type="PANTHER" id="PTHR14911:SF13">
    <property type="entry name" value="TRNA (GUANINE(6)-N2)-METHYLTRANSFERASE THUMP3"/>
    <property type="match status" value="1"/>
</dbReference>
<dbReference type="Pfam" id="PF01170">
    <property type="entry name" value="UPF0020"/>
    <property type="match status" value="1"/>
</dbReference>
<dbReference type="SUPFAM" id="SSF53335">
    <property type="entry name" value="S-adenosyl-L-methionine-dependent methyltransferases"/>
    <property type="match status" value="1"/>
</dbReference>
<evidence type="ECO:0000255" key="1"/>
<evidence type="ECO:0000269" key="2">
    <source>
    </source>
</evidence>
<feature type="chain" id="PRO_0000389017" description="Putative uncharacterized protein DDB_G0293380">
    <location>
        <begin position="1"/>
        <end position="561"/>
    </location>
</feature>
<feature type="coiled-coil region" evidence="1">
    <location>
        <begin position="187"/>
        <end position="217"/>
    </location>
</feature>
<accession>Q54BW1</accession>
<gene>
    <name type="ORF">DDB_G0293380</name>
</gene>
<proteinExistence type="evidence at transcript level"/>
<reference key="1">
    <citation type="journal article" date="2005" name="Nature">
        <title>The genome of the social amoeba Dictyostelium discoideum.</title>
        <authorList>
            <person name="Eichinger L."/>
            <person name="Pachebat J.A."/>
            <person name="Gloeckner G."/>
            <person name="Rajandream M.A."/>
            <person name="Sucgang R."/>
            <person name="Berriman M."/>
            <person name="Song J."/>
            <person name="Olsen R."/>
            <person name="Szafranski K."/>
            <person name="Xu Q."/>
            <person name="Tunggal B."/>
            <person name="Kummerfeld S."/>
            <person name="Madera M."/>
            <person name="Konfortov B.A."/>
            <person name="Rivero F."/>
            <person name="Bankier A.T."/>
            <person name="Lehmann R."/>
            <person name="Hamlin N."/>
            <person name="Davies R."/>
            <person name="Gaudet P."/>
            <person name="Fey P."/>
            <person name="Pilcher K."/>
            <person name="Chen G."/>
            <person name="Saunders D."/>
            <person name="Sodergren E.J."/>
            <person name="Davis P."/>
            <person name="Kerhornou A."/>
            <person name="Nie X."/>
            <person name="Hall N."/>
            <person name="Anjard C."/>
            <person name="Hemphill L."/>
            <person name="Bason N."/>
            <person name="Farbrother P."/>
            <person name="Desany B."/>
            <person name="Just E."/>
            <person name="Morio T."/>
            <person name="Rost R."/>
            <person name="Churcher C.M."/>
            <person name="Cooper J."/>
            <person name="Haydock S."/>
            <person name="van Driessche N."/>
            <person name="Cronin A."/>
            <person name="Goodhead I."/>
            <person name="Muzny D.M."/>
            <person name="Mourier T."/>
            <person name="Pain A."/>
            <person name="Lu M."/>
            <person name="Harper D."/>
            <person name="Lindsay R."/>
            <person name="Hauser H."/>
            <person name="James K.D."/>
            <person name="Quiles M."/>
            <person name="Madan Babu M."/>
            <person name="Saito T."/>
            <person name="Buchrieser C."/>
            <person name="Wardroper A."/>
            <person name="Felder M."/>
            <person name="Thangavelu M."/>
            <person name="Johnson D."/>
            <person name="Knights A."/>
            <person name="Loulseged H."/>
            <person name="Mungall K.L."/>
            <person name="Oliver K."/>
            <person name="Price C."/>
            <person name="Quail M.A."/>
            <person name="Urushihara H."/>
            <person name="Hernandez J."/>
            <person name="Rabbinowitsch E."/>
            <person name="Steffen D."/>
            <person name="Sanders M."/>
            <person name="Ma J."/>
            <person name="Kohara Y."/>
            <person name="Sharp S."/>
            <person name="Simmonds M.N."/>
            <person name="Spiegler S."/>
            <person name="Tivey A."/>
            <person name="Sugano S."/>
            <person name="White B."/>
            <person name="Walker D."/>
            <person name="Woodward J.R."/>
            <person name="Winckler T."/>
            <person name="Tanaka Y."/>
            <person name="Shaulsky G."/>
            <person name="Schleicher M."/>
            <person name="Weinstock G.M."/>
            <person name="Rosenthal A."/>
            <person name="Cox E.C."/>
            <person name="Chisholm R.L."/>
            <person name="Gibbs R.A."/>
            <person name="Loomis W.F."/>
            <person name="Platzer M."/>
            <person name="Kay R.R."/>
            <person name="Williams J.G."/>
            <person name="Dear P.H."/>
            <person name="Noegel A.A."/>
            <person name="Barrell B.G."/>
            <person name="Kuspa A."/>
        </authorList>
    </citation>
    <scope>NUCLEOTIDE SEQUENCE [LARGE SCALE GENOMIC DNA]</scope>
    <source>
        <strain>AX4</strain>
    </source>
</reference>
<reference key="2">
    <citation type="journal article" date="2008" name="BMC Microbiol.">
        <title>Dictyostelium transcriptional responses to Pseudomonas aeruginosa: common and specific effects from PAO1 and PA14 strains.</title>
        <authorList>
            <person name="Carilla-Latorre S."/>
            <person name="Calvo-Garrido J."/>
            <person name="Bloomfield G."/>
            <person name="Skelton J."/>
            <person name="Kay R.R."/>
            <person name="Ivens A."/>
            <person name="Martinez J.L."/>
            <person name="Escalante R."/>
        </authorList>
    </citation>
    <scope>INDUCTION [LARGE SCALE ANALYSIS]</scope>
</reference>
<name>Y3380_DICDI</name>
<protein>
    <recommendedName>
        <fullName>Putative uncharacterized protein DDB_G0293380</fullName>
    </recommendedName>
</protein>